<comment type="interaction">
    <interactant intactId="EBI-12383540">
        <id>Q53RY4</id>
    </interactant>
    <interactant intactId="EBI-12142257">
        <id>Q8TBE3</id>
        <label>FNDC9</label>
    </interactant>
    <organismsDiffer>false</organismsDiffer>
    <experiments>3</experiments>
</comment>
<comment type="interaction">
    <interactant intactId="EBI-12383540">
        <id>Q53RY4</id>
    </interactant>
    <interactant intactId="EBI-16439278">
        <id>Q6FHY5</id>
        <label>MEOX2</label>
    </interactant>
    <organismsDiffer>false</organismsDiffer>
    <experiments>3</experiments>
</comment>
<comment type="subcellular location">
    <subcellularLocation>
        <location>Membrane</location>
        <topology>Multi-pass membrane protein</topology>
    </subcellularLocation>
</comment>
<comment type="alternative products">
    <event type="alternative splicing"/>
    <isoform>
        <id>Q53RY4-1</id>
        <name>1</name>
        <sequence type="displayed"/>
    </isoform>
    <isoform>
        <id>Q53RY4-2</id>
        <name>2</name>
        <sequence type="described" ref="VSP_017530"/>
    </isoform>
</comment>
<comment type="tissue specificity">
    <text evidence="2">Expressed in skin, pancreas and keratinocytes.</text>
</comment>
<comment type="similarity">
    <text evidence="4">Belongs to the TMEM54 family.</text>
</comment>
<feature type="chain" id="PRO_0000226985" description="Keratinocyte-associated protein 3">
    <location>
        <begin position="1"/>
        <end position="240"/>
    </location>
</feature>
<feature type="transmembrane region" description="Helical" evidence="1">
    <location>
        <begin position="21"/>
        <end position="41"/>
    </location>
</feature>
<feature type="transmembrane region" description="Helical" evidence="1">
    <location>
        <begin position="63"/>
        <end position="83"/>
    </location>
</feature>
<feature type="transmembrane region" description="Helical" evidence="1">
    <location>
        <begin position="94"/>
        <end position="114"/>
    </location>
</feature>
<feature type="transmembrane region" description="Helical" evidence="1">
    <location>
        <begin position="163"/>
        <end position="183"/>
    </location>
</feature>
<feature type="splice variant" id="VSP_017530" description="In isoform 2." evidence="3">
    <location>
        <begin position="1"/>
        <end position="18"/>
    </location>
</feature>
<feature type="sequence conflict" description="In Ref. 1; AAO13160." evidence="4" ref="1">
    <original>A</original>
    <variation>T</variation>
    <location>
        <position position="79"/>
    </location>
</feature>
<accession>Q53RY4</accession>
<accession>B7ZL49</accession>
<accession>Q6UW42</accession>
<accession>Q8IWS5</accession>
<gene>
    <name type="primary">KRTCAP3</name>
    <name type="synonym">KCP3</name>
    <name type="ORF">UNQ3066/PRO9898</name>
</gene>
<keyword id="KW-0025">Alternative splicing</keyword>
<keyword id="KW-0472">Membrane</keyword>
<keyword id="KW-1267">Proteomics identification</keyword>
<keyword id="KW-1185">Reference proteome</keyword>
<keyword id="KW-0812">Transmembrane</keyword>
<keyword id="KW-1133">Transmembrane helix</keyword>
<proteinExistence type="evidence at protein level"/>
<evidence type="ECO:0000255" key="1"/>
<evidence type="ECO:0000269" key="2">
    <source>
    </source>
</evidence>
<evidence type="ECO:0000303" key="3">
    <source>
    </source>
</evidence>
<evidence type="ECO:0000305" key="4"/>
<sequence length="240" mass="25627">MRRCSLCAFDAARGPRRLMRVGLALILVGHVNLLLGAVLHGTVLRHVANPRGAVTPEYTVANVISVGSGLLSVSVGLVALLASRNLLRPPLHWVLLALALVNLLLSVACSLGLLLAVSLTVANGGRRLIADCHPGLLDPLVPLDEGPGHTDCPFDPTRIYDTALALWIPSLLMSAGEAALSGYCCVAALTLRGVGPCRKDGLQGQLEEMTELESPKCKRQENEQLLDQNQEIRASQRSWV</sequence>
<reference key="1">
    <citation type="journal article" date="2003" name="Br. J. Dermatol.">
        <title>Identification of novel genes for secreted and membrane-anchored proteins in human keratinocytes.</title>
        <authorList>
            <person name="Bonkobara M."/>
            <person name="Das A."/>
            <person name="Takao J."/>
            <person name="Cruz P.D. Jr."/>
            <person name="Ariizumi K."/>
        </authorList>
    </citation>
    <scope>NUCLEOTIDE SEQUENCE [MRNA] (ISOFORM 1)</scope>
    <scope>TISSUE SPECIFICITY</scope>
    <source>
        <tissue>Keratinocyte</tissue>
    </source>
</reference>
<reference key="2">
    <citation type="journal article" date="2003" name="Genome Res.">
        <title>The secreted protein discovery initiative (SPDI), a large-scale effort to identify novel human secreted and transmembrane proteins: a bioinformatics assessment.</title>
        <authorList>
            <person name="Clark H.F."/>
            <person name="Gurney A.L."/>
            <person name="Abaya E."/>
            <person name="Baker K."/>
            <person name="Baldwin D.T."/>
            <person name="Brush J."/>
            <person name="Chen J."/>
            <person name="Chow B."/>
            <person name="Chui C."/>
            <person name="Crowley C."/>
            <person name="Currell B."/>
            <person name="Deuel B."/>
            <person name="Dowd P."/>
            <person name="Eaton D."/>
            <person name="Foster J.S."/>
            <person name="Grimaldi C."/>
            <person name="Gu Q."/>
            <person name="Hass P.E."/>
            <person name="Heldens S."/>
            <person name="Huang A."/>
            <person name="Kim H.S."/>
            <person name="Klimowski L."/>
            <person name="Jin Y."/>
            <person name="Johnson S."/>
            <person name="Lee J."/>
            <person name="Lewis L."/>
            <person name="Liao D."/>
            <person name="Mark M.R."/>
            <person name="Robbie E."/>
            <person name="Sanchez C."/>
            <person name="Schoenfeld J."/>
            <person name="Seshagiri S."/>
            <person name="Simmons L."/>
            <person name="Singh J."/>
            <person name="Smith V."/>
            <person name="Stinson J."/>
            <person name="Vagts A."/>
            <person name="Vandlen R.L."/>
            <person name="Watanabe C."/>
            <person name="Wieand D."/>
            <person name="Woods K."/>
            <person name="Xie M.-H."/>
            <person name="Yansura D.G."/>
            <person name="Yi S."/>
            <person name="Yu G."/>
            <person name="Yuan J."/>
            <person name="Zhang M."/>
            <person name="Zhang Z."/>
            <person name="Goddard A.D."/>
            <person name="Wood W.I."/>
            <person name="Godowski P.J."/>
            <person name="Gray A.M."/>
        </authorList>
    </citation>
    <scope>NUCLEOTIDE SEQUENCE [LARGE SCALE MRNA] (ISOFORM 2)</scope>
</reference>
<reference key="3">
    <citation type="journal article" date="2005" name="Nature">
        <title>Generation and annotation of the DNA sequences of human chromosomes 2 and 4.</title>
        <authorList>
            <person name="Hillier L.W."/>
            <person name="Graves T.A."/>
            <person name="Fulton R.S."/>
            <person name="Fulton L.A."/>
            <person name="Pepin K.H."/>
            <person name="Minx P."/>
            <person name="Wagner-McPherson C."/>
            <person name="Layman D."/>
            <person name="Wylie K."/>
            <person name="Sekhon M."/>
            <person name="Becker M.C."/>
            <person name="Fewell G.A."/>
            <person name="Delehaunty K.D."/>
            <person name="Miner T.L."/>
            <person name="Nash W.E."/>
            <person name="Kremitzki C."/>
            <person name="Oddy L."/>
            <person name="Du H."/>
            <person name="Sun H."/>
            <person name="Bradshaw-Cordum H."/>
            <person name="Ali J."/>
            <person name="Carter J."/>
            <person name="Cordes M."/>
            <person name="Harris A."/>
            <person name="Isak A."/>
            <person name="van Brunt A."/>
            <person name="Nguyen C."/>
            <person name="Du F."/>
            <person name="Courtney L."/>
            <person name="Kalicki J."/>
            <person name="Ozersky P."/>
            <person name="Abbott S."/>
            <person name="Armstrong J."/>
            <person name="Belter E.A."/>
            <person name="Caruso L."/>
            <person name="Cedroni M."/>
            <person name="Cotton M."/>
            <person name="Davidson T."/>
            <person name="Desai A."/>
            <person name="Elliott G."/>
            <person name="Erb T."/>
            <person name="Fronick C."/>
            <person name="Gaige T."/>
            <person name="Haakenson W."/>
            <person name="Haglund K."/>
            <person name="Holmes A."/>
            <person name="Harkins R."/>
            <person name="Kim K."/>
            <person name="Kruchowski S.S."/>
            <person name="Strong C.M."/>
            <person name="Grewal N."/>
            <person name="Goyea E."/>
            <person name="Hou S."/>
            <person name="Levy A."/>
            <person name="Martinka S."/>
            <person name="Mead K."/>
            <person name="McLellan M.D."/>
            <person name="Meyer R."/>
            <person name="Randall-Maher J."/>
            <person name="Tomlinson C."/>
            <person name="Dauphin-Kohlberg S."/>
            <person name="Kozlowicz-Reilly A."/>
            <person name="Shah N."/>
            <person name="Swearengen-Shahid S."/>
            <person name="Snider J."/>
            <person name="Strong J.T."/>
            <person name="Thompson J."/>
            <person name="Yoakum M."/>
            <person name="Leonard S."/>
            <person name="Pearman C."/>
            <person name="Trani L."/>
            <person name="Radionenko M."/>
            <person name="Waligorski J.E."/>
            <person name="Wang C."/>
            <person name="Rock S.M."/>
            <person name="Tin-Wollam A.-M."/>
            <person name="Maupin R."/>
            <person name="Latreille P."/>
            <person name="Wendl M.C."/>
            <person name="Yang S.-P."/>
            <person name="Pohl C."/>
            <person name="Wallis J.W."/>
            <person name="Spieth J."/>
            <person name="Bieri T.A."/>
            <person name="Berkowicz N."/>
            <person name="Nelson J.O."/>
            <person name="Osborne J."/>
            <person name="Ding L."/>
            <person name="Meyer R."/>
            <person name="Sabo A."/>
            <person name="Shotland Y."/>
            <person name="Sinha P."/>
            <person name="Wohldmann P.E."/>
            <person name="Cook L.L."/>
            <person name="Hickenbotham M.T."/>
            <person name="Eldred J."/>
            <person name="Williams D."/>
            <person name="Jones T.A."/>
            <person name="She X."/>
            <person name="Ciccarelli F.D."/>
            <person name="Izaurralde E."/>
            <person name="Taylor J."/>
            <person name="Schmutz J."/>
            <person name="Myers R.M."/>
            <person name="Cox D.R."/>
            <person name="Huang X."/>
            <person name="McPherson J.D."/>
            <person name="Mardis E.R."/>
            <person name="Clifton S.W."/>
            <person name="Warren W.C."/>
            <person name="Chinwalla A.T."/>
            <person name="Eddy S.R."/>
            <person name="Marra M.A."/>
            <person name="Ovcharenko I."/>
            <person name="Furey T.S."/>
            <person name="Miller W."/>
            <person name="Eichler E.E."/>
            <person name="Bork P."/>
            <person name="Suyama M."/>
            <person name="Torrents D."/>
            <person name="Waterston R.H."/>
            <person name="Wilson R.K."/>
        </authorList>
    </citation>
    <scope>NUCLEOTIDE SEQUENCE [LARGE SCALE GENOMIC DNA]</scope>
</reference>
<reference key="4">
    <citation type="submission" date="2005-09" db="EMBL/GenBank/DDBJ databases">
        <authorList>
            <person name="Mural R.J."/>
            <person name="Istrail S."/>
            <person name="Sutton G.G."/>
            <person name="Florea L."/>
            <person name="Halpern A.L."/>
            <person name="Mobarry C.M."/>
            <person name="Lippert R."/>
            <person name="Walenz B."/>
            <person name="Shatkay H."/>
            <person name="Dew I."/>
            <person name="Miller J.R."/>
            <person name="Flanigan M.J."/>
            <person name="Edwards N.J."/>
            <person name="Bolanos R."/>
            <person name="Fasulo D."/>
            <person name="Halldorsson B.V."/>
            <person name="Hannenhalli S."/>
            <person name="Turner R."/>
            <person name="Yooseph S."/>
            <person name="Lu F."/>
            <person name="Nusskern D.R."/>
            <person name="Shue B.C."/>
            <person name="Zheng X.H."/>
            <person name="Zhong F."/>
            <person name="Delcher A.L."/>
            <person name="Huson D.H."/>
            <person name="Kravitz S.A."/>
            <person name="Mouchard L."/>
            <person name="Reinert K."/>
            <person name="Remington K.A."/>
            <person name="Clark A.G."/>
            <person name="Waterman M.S."/>
            <person name="Eichler E.E."/>
            <person name="Adams M.D."/>
            <person name="Hunkapiller M.W."/>
            <person name="Myers E.W."/>
            <person name="Venter J.C."/>
        </authorList>
    </citation>
    <scope>NUCLEOTIDE SEQUENCE [LARGE SCALE GENOMIC DNA]</scope>
</reference>
<reference key="5">
    <citation type="journal article" date="2004" name="Genome Res.">
        <title>The status, quality, and expansion of the NIH full-length cDNA project: the Mammalian Gene Collection (MGC).</title>
        <authorList>
            <consortium name="The MGC Project Team"/>
        </authorList>
    </citation>
    <scope>NUCLEOTIDE SEQUENCE [LARGE SCALE MRNA] (ISOFORM 1)</scope>
    <source>
        <tissue>Lung</tissue>
    </source>
</reference>
<name>KCP3_HUMAN</name>
<organism>
    <name type="scientific">Homo sapiens</name>
    <name type="common">Human</name>
    <dbReference type="NCBI Taxonomy" id="9606"/>
    <lineage>
        <taxon>Eukaryota</taxon>
        <taxon>Metazoa</taxon>
        <taxon>Chordata</taxon>
        <taxon>Craniata</taxon>
        <taxon>Vertebrata</taxon>
        <taxon>Euteleostomi</taxon>
        <taxon>Mammalia</taxon>
        <taxon>Eutheria</taxon>
        <taxon>Euarchontoglires</taxon>
        <taxon>Primates</taxon>
        <taxon>Haplorrhini</taxon>
        <taxon>Catarrhini</taxon>
        <taxon>Hominidae</taxon>
        <taxon>Homo</taxon>
    </lineage>
</organism>
<protein>
    <recommendedName>
        <fullName>Keratinocyte-associated protein 3</fullName>
        <shortName>KCP-3</shortName>
    </recommendedName>
</protein>
<dbReference type="EMBL" id="AY157576">
    <property type="protein sequence ID" value="AAO13160.1"/>
    <property type="molecule type" value="mRNA"/>
</dbReference>
<dbReference type="EMBL" id="AY358993">
    <property type="protein sequence ID" value="AAQ89352.1"/>
    <property type="molecule type" value="mRNA"/>
</dbReference>
<dbReference type="EMBL" id="AC074117">
    <property type="protein sequence ID" value="AAY14848.1"/>
    <property type="molecule type" value="Genomic_DNA"/>
</dbReference>
<dbReference type="EMBL" id="CH471053">
    <property type="protein sequence ID" value="EAX00577.1"/>
    <property type="molecule type" value="Genomic_DNA"/>
</dbReference>
<dbReference type="EMBL" id="BC101687">
    <property type="protein sequence ID" value="AAI01688.1"/>
    <property type="molecule type" value="mRNA"/>
</dbReference>
<dbReference type="EMBL" id="BC101689">
    <property type="protein sequence ID" value="AAI01690.1"/>
    <property type="molecule type" value="mRNA"/>
</dbReference>
<dbReference type="EMBL" id="BC143574">
    <property type="protein sequence ID" value="AAI43575.1"/>
    <property type="molecule type" value="mRNA"/>
</dbReference>
<dbReference type="CCDS" id="CCDS1754.1">
    <molecule id="Q53RY4-1"/>
</dbReference>
<dbReference type="RefSeq" id="NP_001161836.1">
    <molecule id="Q53RY4-1"/>
    <property type="nucleotide sequence ID" value="NM_001168364.2"/>
</dbReference>
<dbReference type="RefSeq" id="NP_001308254.1">
    <molecule id="Q53RY4-1"/>
    <property type="nucleotide sequence ID" value="NM_001321325.2"/>
</dbReference>
<dbReference type="RefSeq" id="NP_776252.2">
    <molecule id="Q53RY4-1"/>
    <property type="nucleotide sequence ID" value="NM_173853.4"/>
</dbReference>
<dbReference type="RefSeq" id="XP_047299660.1">
    <molecule id="Q53RY4-1"/>
    <property type="nucleotide sequence ID" value="XM_047443704.1"/>
</dbReference>
<dbReference type="RefSeq" id="XP_054196978.1">
    <molecule id="Q53RY4-1"/>
    <property type="nucleotide sequence ID" value="XM_054341003.1"/>
</dbReference>
<dbReference type="BioGRID" id="128340">
    <property type="interactions" value="71"/>
</dbReference>
<dbReference type="FunCoup" id="Q53RY4">
    <property type="interactions" value="25"/>
</dbReference>
<dbReference type="IntAct" id="Q53RY4">
    <property type="interactions" value="32"/>
</dbReference>
<dbReference type="STRING" id="9606.ENSP00000442400"/>
<dbReference type="iPTMnet" id="Q53RY4"/>
<dbReference type="PhosphoSitePlus" id="Q53RY4"/>
<dbReference type="SwissPalm" id="Q53RY4"/>
<dbReference type="BioMuta" id="KRTCAP3"/>
<dbReference type="DMDM" id="74726625"/>
<dbReference type="jPOST" id="Q53RY4"/>
<dbReference type="MassIVE" id="Q53RY4"/>
<dbReference type="PaxDb" id="9606-ENSP00000442400"/>
<dbReference type="PeptideAtlas" id="Q53RY4"/>
<dbReference type="ProteomicsDB" id="62527">
    <molecule id="Q53RY4-1"/>
</dbReference>
<dbReference type="ProteomicsDB" id="62528">
    <molecule id="Q53RY4-2"/>
</dbReference>
<dbReference type="Antibodypedia" id="62768">
    <property type="antibodies" value="17 antibodies from 8 providers"/>
</dbReference>
<dbReference type="DNASU" id="200634"/>
<dbReference type="Ensembl" id="ENST00000288873.7">
    <molecule id="Q53RY4-1"/>
    <property type="protein sequence ID" value="ENSP00000288873.3"/>
    <property type="gene ID" value="ENSG00000157992.12"/>
</dbReference>
<dbReference type="Ensembl" id="ENST00000407293.5">
    <molecule id="Q53RY4-2"/>
    <property type="protein sequence ID" value="ENSP00000384689.1"/>
    <property type="gene ID" value="ENSG00000157992.12"/>
</dbReference>
<dbReference type="Ensembl" id="ENST00000543753.5">
    <molecule id="Q53RY4-1"/>
    <property type="protein sequence ID" value="ENSP00000442400.1"/>
    <property type="gene ID" value="ENSG00000157992.12"/>
</dbReference>
<dbReference type="GeneID" id="200634"/>
<dbReference type="KEGG" id="hsa:200634"/>
<dbReference type="MANE-Select" id="ENST00000288873.7">
    <property type="protein sequence ID" value="ENSP00000288873.3"/>
    <property type="RefSeq nucleotide sequence ID" value="NM_173853.4"/>
    <property type="RefSeq protein sequence ID" value="NP_776252.2"/>
</dbReference>
<dbReference type="UCSC" id="uc002rks.4">
    <molecule id="Q53RY4-1"/>
    <property type="organism name" value="human"/>
</dbReference>
<dbReference type="AGR" id="HGNC:28943"/>
<dbReference type="CTD" id="200634"/>
<dbReference type="DisGeNET" id="200634"/>
<dbReference type="GeneCards" id="KRTCAP3"/>
<dbReference type="HGNC" id="HGNC:28943">
    <property type="gene designation" value="KRTCAP3"/>
</dbReference>
<dbReference type="HPA" id="ENSG00000157992">
    <property type="expression patterns" value="Low tissue specificity"/>
</dbReference>
<dbReference type="MalaCards" id="KRTCAP3"/>
<dbReference type="MIM" id="619261">
    <property type="type" value="gene"/>
</dbReference>
<dbReference type="neXtProt" id="NX_Q53RY4"/>
<dbReference type="OpenTargets" id="ENSG00000157992"/>
<dbReference type="PharmGKB" id="PA134974952"/>
<dbReference type="VEuPathDB" id="HostDB:ENSG00000157992"/>
<dbReference type="eggNOG" id="ENOG502QWFA">
    <property type="taxonomic scope" value="Eukaryota"/>
</dbReference>
<dbReference type="GeneTree" id="ENSGT00390000004700"/>
<dbReference type="HOGENOM" id="CLU_089663_0_0_1"/>
<dbReference type="InParanoid" id="Q53RY4"/>
<dbReference type="OMA" id="CKWQENV"/>
<dbReference type="OrthoDB" id="8718199at2759"/>
<dbReference type="PAN-GO" id="Q53RY4">
    <property type="GO annotations" value="0 GO annotations based on evolutionary models"/>
</dbReference>
<dbReference type="PhylomeDB" id="Q53RY4"/>
<dbReference type="TreeFam" id="TF332771"/>
<dbReference type="PathwayCommons" id="Q53RY4"/>
<dbReference type="SignaLink" id="Q53RY4"/>
<dbReference type="BioGRID-ORCS" id="200634">
    <property type="hits" value="7 hits in 1147 CRISPR screens"/>
</dbReference>
<dbReference type="ChiTaRS" id="KRTCAP3">
    <property type="organism name" value="human"/>
</dbReference>
<dbReference type="GenomeRNAi" id="200634"/>
<dbReference type="Pharos" id="Q53RY4">
    <property type="development level" value="Tdark"/>
</dbReference>
<dbReference type="PRO" id="PR:Q53RY4"/>
<dbReference type="Proteomes" id="UP000005640">
    <property type="component" value="Chromosome 2"/>
</dbReference>
<dbReference type="RNAct" id="Q53RY4">
    <property type="molecule type" value="protein"/>
</dbReference>
<dbReference type="Bgee" id="ENSG00000157992">
    <property type="expression patterns" value="Expressed in mucosa of transverse colon and 132 other cell types or tissues"/>
</dbReference>
<dbReference type="ExpressionAtlas" id="Q53RY4">
    <property type="expression patterns" value="baseline and differential"/>
</dbReference>
<dbReference type="GO" id="GO:0016020">
    <property type="term" value="C:membrane"/>
    <property type="evidence" value="ECO:0007669"/>
    <property type="project" value="UniProtKB-SubCell"/>
</dbReference>
<dbReference type="InterPro" id="IPR020977">
    <property type="entry name" value="Beta-casein-like"/>
</dbReference>
<dbReference type="PANTHER" id="PTHR31258">
    <property type="entry name" value="KERATINOCYTE-ASSOCIATED PROTEIN 3"/>
    <property type="match status" value="1"/>
</dbReference>
<dbReference type="PANTHER" id="PTHR31258:SF1">
    <property type="entry name" value="KERATINOCYTE-ASSOCIATED PROTEIN 3"/>
    <property type="match status" value="1"/>
</dbReference>
<dbReference type="Pfam" id="PF12304">
    <property type="entry name" value="BCLP"/>
    <property type="match status" value="1"/>
</dbReference>